<keyword id="KW-0002">3D-structure</keyword>
<keyword id="KW-1003">Cell membrane</keyword>
<keyword id="KW-0342">GTP-binding</keyword>
<keyword id="KW-0449">Lipoprotein</keyword>
<keyword id="KW-0472">Membrane</keyword>
<keyword id="KW-0547">Nucleotide-binding</keyword>
<keyword id="KW-0636">Prenylation</keyword>
<keyword id="KW-0653">Protein transport</keyword>
<keyword id="KW-1185">Reference proteome</keyword>
<keyword id="KW-0813">Transport</keyword>
<accession>P28185</accession>
<evidence type="ECO:0000250" key="1"/>
<evidence type="ECO:0000269" key="2">
    <source>
    </source>
</evidence>
<evidence type="ECO:0000269" key="3">
    <source>
    </source>
</evidence>
<evidence type="ECO:0000305" key="4"/>
<evidence type="ECO:0000305" key="5">
    <source>
    </source>
</evidence>
<evidence type="ECO:0007829" key="6">
    <source>
        <dbReference type="PDB" id="5XR4"/>
    </source>
</evidence>
<evidence type="ECO:0007829" key="7">
    <source>
        <dbReference type="PDB" id="5XR6"/>
    </source>
</evidence>
<protein>
    <recommendedName>
        <fullName>Ras-related protein RABA1a</fullName>
        <shortName>AtRABA1a</shortName>
    </recommendedName>
    <alternativeName>
        <fullName>Ras-related protein Ara-2</fullName>
    </alternativeName>
    <alternativeName>
        <fullName>Ras-related protein Rab11E</fullName>
        <shortName>AtRab11E</shortName>
    </alternativeName>
</protein>
<dbReference type="EMBL" id="D01024">
    <property type="protein sequence ID" value="BAA00829.1"/>
    <property type="molecule type" value="mRNA"/>
</dbReference>
<dbReference type="EMBL" id="AC068143">
    <property type="protein sequence ID" value="AAF82168.1"/>
    <property type="molecule type" value="Genomic_DNA"/>
</dbReference>
<dbReference type="EMBL" id="CP002684">
    <property type="protein sequence ID" value="AEE27982.1"/>
    <property type="molecule type" value="Genomic_DNA"/>
</dbReference>
<dbReference type="EMBL" id="AF332428">
    <property type="protein sequence ID" value="AAG48791.1"/>
    <property type="molecule type" value="mRNA"/>
</dbReference>
<dbReference type="EMBL" id="AY065306">
    <property type="protein sequence ID" value="AAL38782.1"/>
    <property type="molecule type" value="mRNA"/>
</dbReference>
<dbReference type="EMBL" id="AY096439">
    <property type="protein sequence ID" value="AAM20079.1"/>
    <property type="molecule type" value="mRNA"/>
</dbReference>
<dbReference type="PIR" id="JS0639">
    <property type="entry name" value="JS0639"/>
</dbReference>
<dbReference type="RefSeq" id="NP_172128.1">
    <property type="nucleotide sequence ID" value="NM_100520.4"/>
</dbReference>
<dbReference type="PDB" id="5XR4">
    <property type="method" value="X-ray"/>
    <property type="resolution" value="2.80 A"/>
    <property type="chains" value="A/B=10-182"/>
</dbReference>
<dbReference type="PDB" id="5XR6">
    <property type="method" value="X-ray"/>
    <property type="resolution" value="2.60 A"/>
    <property type="chains" value="A/B=10-182"/>
</dbReference>
<dbReference type="PDB" id="5XR7">
    <property type="method" value="X-ray"/>
    <property type="resolution" value="2.60 A"/>
    <property type="chains" value="A/B=10-182"/>
</dbReference>
<dbReference type="PDBsum" id="5XR4"/>
<dbReference type="PDBsum" id="5XR6"/>
<dbReference type="PDBsum" id="5XR7"/>
<dbReference type="SMR" id="P28185"/>
<dbReference type="BioGRID" id="22392">
    <property type="interactions" value="3"/>
</dbReference>
<dbReference type="FunCoup" id="P28185">
    <property type="interactions" value="3599"/>
</dbReference>
<dbReference type="IntAct" id="P28185">
    <property type="interactions" value="2"/>
</dbReference>
<dbReference type="STRING" id="3702.P28185"/>
<dbReference type="iPTMnet" id="P28185"/>
<dbReference type="PaxDb" id="3702-AT1G06400.1"/>
<dbReference type="ProteomicsDB" id="236611"/>
<dbReference type="EnsemblPlants" id="AT1G06400.1">
    <property type="protein sequence ID" value="AT1G06400.1"/>
    <property type="gene ID" value="AT1G06400"/>
</dbReference>
<dbReference type="GeneID" id="837151"/>
<dbReference type="Gramene" id="AT1G06400.1">
    <property type="protein sequence ID" value="AT1G06400.1"/>
    <property type="gene ID" value="AT1G06400"/>
</dbReference>
<dbReference type="KEGG" id="ath:AT1G06400"/>
<dbReference type="Araport" id="AT1G06400"/>
<dbReference type="TAIR" id="AT1G06400">
    <property type="gene designation" value="ARA-2"/>
</dbReference>
<dbReference type="eggNOG" id="KOG0087">
    <property type="taxonomic scope" value="Eukaryota"/>
</dbReference>
<dbReference type="HOGENOM" id="CLU_041217_23_0_1"/>
<dbReference type="InParanoid" id="P28185"/>
<dbReference type="OMA" id="GMERFRC"/>
<dbReference type="OrthoDB" id="9989112at2759"/>
<dbReference type="PhylomeDB" id="P28185"/>
<dbReference type="PRO" id="PR:P28185"/>
<dbReference type="Proteomes" id="UP000006548">
    <property type="component" value="Chromosome 1"/>
</dbReference>
<dbReference type="ExpressionAtlas" id="P28185">
    <property type="expression patterns" value="baseline and differential"/>
</dbReference>
<dbReference type="GO" id="GO:0005829">
    <property type="term" value="C:cytosol"/>
    <property type="evidence" value="ECO:0000314"/>
    <property type="project" value="TAIR"/>
</dbReference>
<dbReference type="GO" id="GO:0005768">
    <property type="term" value="C:endosome"/>
    <property type="evidence" value="ECO:0000314"/>
    <property type="project" value="TAIR"/>
</dbReference>
<dbReference type="GO" id="GO:0005576">
    <property type="term" value="C:extracellular region"/>
    <property type="evidence" value="ECO:0007005"/>
    <property type="project" value="TAIR"/>
</dbReference>
<dbReference type="GO" id="GO:0005886">
    <property type="term" value="C:plasma membrane"/>
    <property type="evidence" value="ECO:0000314"/>
    <property type="project" value="UniProtKB"/>
</dbReference>
<dbReference type="GO" id="GO:0005525">
    <property type="term" value="F:GTP binding"/>
    <property type="evidence" value="ECO:0000314"/>
    <property type="project" value="UniProtKB"/>
</dbReference>
<dbReference type="GO" id="GO:0003924">
    <property type="term" value="F:GTPase activity"/>
    <property type="evidence" value="ECO:0000314"/>
    <property type="project" value="UniProtKB"/>
</dbReference>
<dbReference type="GO" id="GO:0042546">
    <property type="term" value="P:cell wall biogenesis"/>
    <property type="evidence" value="ECO:0000315"/>
    <property type="project" value="TAIR"/>
</dbReference>
<dbReference type="GO" id="GO:0015031">
    <property type="term" value="P:protein transport"/>
    <property type="evidence" value="ECO:0007669"/>
    <property type="project" value="UniProtKB-KW"/>
</dbReference>
<dbReference type="GO" id="GO:0009733">
    <property type="term" value="P:response to auxin"/>
    <property type="evidence" value="ECO:0000315"/>
    <property type="project" value="UniProtKB"/>
</dbReference>
<dbReference type="CDD" id="cd01868">
    <property type="entry name" value="Rab11_like"/>
    <property type="match status" value="1"/>
</dbReference>
<dbReference type="FunFam" id="3.40.50.300:FF:000067">
    <property type="entry name" value="ras-related protein RABA1f"/>
    <property type="match status" value="1"/>
</dbReference>
<dbReference type="Gene3D" id="3.40.50.300">
    <property type="entry name" value="P-loop containing nucleotide triphosphate hydrolases"/>
    <property type="match status" value="1"/>
</dbReference>
<dbReference type="InterPro" id="IPR027417">
    <property type="entry name" value="P-loop_NTPase"/>
</dbReference>
<dbReference type="InterPro" id="IPR050209">
    <property type="entry name" value="Rab_GTPases_membrane_traffic"/>
</dbReference>
<dbReference type="InterPro" id="IPR005225">
    <property type="entry name" value="Small_GTP-bd"/>
</dbReference>
<dbReference type="InterPro" id="IPR001806">
    <property type="entry name" value="Small_GTPase"/>
</dbReference>
<dbReference type="NCBIfam" id="TIGR00231">
    <property type="entry name" value="small_GTP"/>
    <property type="match status" value="1"/>
</dbReference>
<dbReference type="PANTHER" id="PTHR47979">
    <property type="entry name" value="DRAB11-RELATED"/>
    <property type="match status" value="1"/>
</dbReference>
<dbReference type="Pfam" id="PF00071">
    <property type="entry name" value="Ras"/>
    <property type="match status" value="1"/>
</dbReference>
<dbReference type="PRINTS" id="PR00449">
    <property type="entry name" value="RASTRNSFRMNG"/>
</dbReference>
<dbReference type="SMART" id="SM00175">
    <property type="entry name" value="RAB"/>
    <property type="match status" value="1"/>
</dbReference>
<dbReference type="SMART" id="SM00176">
    <property type="entry name" value="RAN"/>
    <property type="match status" value="1"/>
</dbReference>
<dbReference type="SMART" id="SM00173">
    <property type="entry name" value="RAS"/>
    <property type="match status" value="1"/>
</dbReference>
<dbReference type="SMART" id="SM00174">
    <property type="entry name" value="RHO"/>
    <property type="match status" value="1"/>
</dbReference>
<dbReference type="SUPFAM" id="SSF52540">
    <property type="entry name" value="P-loop containing nucleoside triphosphate hydrolases"/>
    <property type="match status" value="1"/>
</dbReference>
<dbReference type="PROSITE" id="PS51419">
    <property type="entry name" value="RAB"/>
    <property type="match status" value="1"/>
</dbReference>
<sequence>MAGYRADEEYDYLFKLVLIGDSGVGKSNLLSRFTKNEFNLESKSTIGVEFATKTTKVEGKVVKAQIWDTAGQERYRAITSAYYRGAVGALLIYDVTRHATFENAARWLRELRGHTDPNIVVMLIGNKCDLRHLVAVKTEEAKAFAERESLYFMETSALDATNVENAFTEVLTQIHKIVSKRSVDGGGESADLPGKGETINVKEDGSVLKRMGCCSN</sequence>
<name>RAA1A_ARATH</name>
<gene>
    <name type="primary">RABA1A</name>
    <name type="synonym">ARA-2</name>
    <name type="synonym">RAB11E</name>
    <name type="ordered locus">At1g06400</name>
    <name type="ORF">T2D23.10</name>
    <name type="ORF">T2D23_5</name>
</gene>
<proteinExistence type="evidence at protein level"/>
<comment type="function">
    <text evidence="2 3">Involved in auxin-mediated response. May be involved in vesicle trafficking of components involved in polar auxin transport. Binds GTP and GDP and possesses intrinsic GTPase activity.</text>
</comment>
<comment type="interaction">
    <interactant intactId="EBI-16944336">
        <id>P28185</id>
    </interactant>
    <interactant intactId="EBI-4425250">
        <id>Q8LA96</id>
        <label>BPL1</label>
    </interactant>
    <organismsDiffer>false</organismsDiffer>
    <experiments>3</experiments>
</comment>
<comment type="subcellular location">
    <subcellularLocation>
        <location evidence="5">Cell membrane</location>
        <topology evidence="5">Lipid-anchor</topology>
    </subcellularLocation>
    <text>Located in the plasma membrane and endocytic vesicles derived from the plasma membrane.</text>
</comment>
<comment type="induction">
    <text evidence="2">By auxin.</text>
</comment>
<comment type="disruption phenotype">
    <text evidence="2">Slight increase of primary root elongation and lateral root branching and hypersensitivity of root growth in response to exogenous auxin.</text>
</comment>
<comment type="miscellaneous">
    <text evidence="5">Plants overexpressing RABA1A show reduced growth of roots and shoots and smaller leaf sizes.</text>
</comment>
<comment type="similarity">
    <text evidence="4">Belongs to the small GTPase superfamily. Rab family.</text>
</comment>
<organism>
    <name type="scientific">Arabidopsis thaliana</name>
    <name type="common">Mouse-ear cress</name>
    <dbReference type="NCBI Taxonomy" id="3702"/>
    <lineage>
        <taxon>Eukaryota</taxon>
        <taxon>Viridiplantae</taxon>
        <taxon>Streptophyta</taxon>
        <taxon>Embryophyta</taxon>
        <taxon>Tracheophyta</taxon>
        <taxon>Spermatophyta</taxon>
        <taxon>Magnoliopsida</taxon>
        <taxon>eudicotyledons</taxon>
        <taxon>Gunneridae</taxon>
        <taxon>Pentapetalae</taxon>
        <taxon>rosids</taxon>
        <taxon>malvids</taxon>
        <taxon>Brassicales</taxon>
        <taxon>Brassicaceae</taxon>
        <taxon>Camelineae</taxon>
        <taxon>Arabidopsis</taxon>
    </lineage>
</organism>
<feature type="chain" id="PRO_0000121162" description="Ras-related protein RABA1a">
    <location>
        <begin position="1"/>
        <end position="216"/>
    </location>
</feature>
<feature type="short sequence motif" description="Effector region" evidence="1">
    <location>
        <begin position="42"/>
        <end position="50"/>
    </location>
</feature>
<feature type="binding site" evidence="1">
    <location>
        <begin position="20"/>
        <end position="27"/>
    </location>
    <ligand>
        <name>GTP</name>
        <dbReference type="ChEBI" id="CHEBI:37565"/>
    </ligand>
</feature>
<feature type="binding site" evidence="1">
    <location>
        <begin position="68"/>
        <end position="72"/>
    </location>
    <ligand>
        <name>GTP</name>
        <dbReference type="ChEBI" id="CHEBI:37565"/>
    </ligand>
</feature>
<feature type="binding site" evidence="1">
    <location>
        <begin position="126"/>
        <end position="129"/>
    </location>
    <ligand>
        <name>GTP</name>
        <dbReference type="ChEBI" id="CHEBI:37565"/>
    </ligand>
</feature>
<feature type="binding site" evidence="1">
    <location>
        <begin position="156"/>
        <end position="157"/>
    </location>
    <ligand>
        <name>GTP</name>
        <dbReference type="ChEBI" id="CHEBI:37565"/>
    </ligand>
</feature>
<feature type="lipid moiety-binding region" description="S-geranylgeranyl cysteine" evidence="1">
    <location>
        <position position="213"/>
    </location>
</feature>
<feature type="lipid moiety-binding region" description="S-geranylgeranyl cysteine" evidence="1">
    <location>
        <position position="214"/>
    </location>
</feature>
<feature type="mutagenesis site" description="Loss of GTPase activity." evidence="3">
    <original>Q</original>
    <variation>L</variation>
    <location>
        <position position="72"/>
    </location>
</feature>
<feature type="mutagenesis site" description="Decreases GTP-binding." evidence="3">
    <original>N</original>
    <variation>I</variation>
    <location>
        <position position="126"/>
    </location>
</feature>
<feature type="strand" evidence="7">
    <location>
        <begin position="11"/>
        <end position="19"/>
    </location>
</feature>
<feature type="helix" evidence="7">
    <location>
        <begin position="26"/>
        <end position="34"/>
    </location>
</feature>
<feature type="strand" evidence="7">
    <location>
        <begin position="47"/>
        <end position="57"/>
    </location>
</feature>
<feature type="strand" evidence="7">
    <location>
        <begin position="60"/>
        <end position="69"/>
    </location>
</feature>
<feature type="helix" evidence="6">
    <location>
        <begin position="70"/>
        <end position="72"/>
    </location>
</feature>
<feature type="turn" evidence="6">
    <location>
        <begin position="73"/>
        <end position="76"/>
    </location>
</feature>
<feature type="helix" evidence="7">
    <location>
        <begin position="79"/>
        <end position="83"/>
    </location>
</feature>
<feature type="strand" evidence="7">
    <location>
        <begin position="88"/>
        <end position="94"/>
    </location>
</feature>
<feature type="helix" evidence="7">
    <location>
        <begin position="98"/>
        <end position="102"/>
    </location>
</feature>
<feature type="helix" evidence="7">
    <location>
        <begin position="104"/>
        <end position="112"/>
    </location>
</feature>
<feature type="strand" evidence="7">
    <location>
        <begin position="120"/>
        <end position="126"/>
    </location>
</feature>
<feature type="helix" evidence="7">
    <location>
        <begin position="131"/>
        <end position="133"/>
    </location>
</feature>
<feature type="helix" evidence="7">
    <location>
        <begin position="138"/>
        <end position="148"/>
    </location>
</feature>
<feature type="strand" evidence="7">
    <location>
        <begin position="151"/>
        <end position="156"/>
    </location>
</feature>
<feature type="turn" evidence="7">
    <location>
        <begin position="157"/>
        <end position="160"/>
    </location>
</feature>
<feature type="helix" evidence="7">
    <location>
        <begin position="163"/>
        <end position="178"/>
    </location>
</feature>
<reference key="1">
    <citation type="journal article" date="1991" name="Gene">
        <title>Isolation and analysis of cDNAs encoding small GTP-binding proteins of Arabidopsis thaliana.</title>
        <authorList>
            <person name="Anai T."/>
            <person name="Hasegawa K."/>
            <person name="Watanabe Y."/>
            <person name="Uchimiya H."/>
            <person name="Ishizaki R."/>
            <person name="Matsui M."/>
        </authorList>
    </citation>
    <scope>NUCLEOTIDE SEQUENCE [MRNA]</scope>
    <source>
        <strain>cv. Columbia</strain>
        <strain>cv. En-1</strain>
        <strain>cv. Est</strain>
        <strain>cv. Landsberg erecta</strain>
        <strain>cv. Lapalmam</strain>
        <tissue>Leaf</tissue>
    </source>
</reference>
<reference key="2">
    <citation type="journal article" date="2000" name="Nature">
        <title>Sequence and analysis of chromosome 1 of the plant Arabidopsis thaliana.</title>
        <authorList>
            <person name="Theologis A."/>
            <person name="Ecker J.R."/>
            <person name="Palm C.J."/>
            <person name="Federspiel N.A."/>
            <person name="Kaul S."/>
            <person name="White O."/>
            <person name="Alonso J."/>
            <person name="Altafi H."/>
            <person name="Araujo R."/>
            <person name="Bowman C.L."/>
            <person name="Brooks S.Y."/>
            <person name="Buehler E."/>
            <person name="Chan A."/>
            <person name="Chao Q."/>
            <person name="Chen H."/>
            <person name="Cheuk R.F."/>
            <person name="Chin C.W."/>
            <person name="Chung M.K."/>
            <person name="Conn L."/>
            <person name="Conway A.B."/>
            <person name="Conway A.R."/>
            <person name="Creasy T.H."/>
            <person name="Dewar K."/>
            <person name="Dunn P."/>
            <person name="Etgu P."/>
            <person name="Feldblyum T.V."/>
            <person name="Feng J.-D."/>
            <person name="Fong B."/>
            <person name="Fujii C.Y."/>
            <person name="Gill J.E."/>
            <person name="Goldsmith A.D."/>
            <person name="Haas B."/>
            <person name="Hansen N.F."/>
            <person name="Hughes B."/>
            <person name="Huizar L."/>
            <person name="Hunter J.L."/>
            <person name="Jenkins J."/>
            <person name="Johnson-Hopson C."/>
            <person name="Khan S."/>
            <person name="Khaykin E."/>
            <person name="Kim C.J."/>
            <person name="Koo H.L."/>
            <person name="Kremenetskaia I."/>
            <person name="Kurtz D.B."/>
            <person name="Kwan A."/>
            <person name="Lam B."/>
            <person name="Langin-Hooper S."/>
            <person name="Lee A."/>
            <person name="Lee J.M."/>
            <person name="Lenz C.A."/>
            <person name="Li J.H."/>
            <person name="Li Y.-P."/>
            <person name="Lin X."/>
            <person name="Liu S.X."/>
            <person name="Liu Z.A."/>
            <person name="Luros J.S."/>
            <person name="Maiti R."/>
            <person name="Marziali A."/>
            <person name="Militscher J."/>
            <person name="Miranda M."/>
            <person name="Nguyen M."/>
            <person name="Nierman W.C."/>
            <person name="Osborne B.I."/>
            <person name="Pai G."/>
            <person name="Peterson J."/>
            <person name="Pham P.K."/>
            <person name="Rizzo M."/>
            <person name="Rooney T."/>
            <person name="Rowley D."/>
            <person name="Sakano H."/>
            <person name="Salzberg S.L."/>
            <person name="Schwartz J.R."/>
            <person name="Shinn P."/>
            <person name="Southwick A.M."/>
            <person name="Sun H."/>
            <person name="Tallon L.J."/>
            <person name="Tambunga G."/>
            <person name="Toriumi M.J."/>
            <person name="Town C.D."/>
            <person name="Utterback T."/>
            <person name="Van Aken S."/>
            <person name="Vaysberg M."/>
            <person name="Vysotskaia V.S."/>
            <person name="Walker M."/>
            <person name="Wu D."/>
            <person name="Yu G."/>
            <person name="Fraser C.M."/>
            <person name="Venter J.C."/>
            <person name="Davis R.W."/>
        </authorList>
    </citation>
    <scope>NUCLEOTIDE SEQUENCE [LARGE SCALE GENOMIC DNA]</scope>
    <source>
        <strain>cv. Columbia</strain>
    </source>
</reference>
<reference key="3">
    <citation type="journal article" date="2017" name="Plant J.">
        <title>Araport11: a complete reannotation of the Arabidopsis thaliana reference genome.</title>
        <authorList>
            <person name="Cheng C.Y."/>
            <person name="Krishnakumar V."/>
            <person name="Chan A.P."/>
            <person name="Thibaud-Nissen F."/>
            <person name="Schobel S."/>
            <person name="Town C.D."/>
        </authorList>
    </citation>
    <scope>GENOME REANNOTATION</scope>
    <source>
        <strain>cv. Columbia</strain>
    </source>
</reference>
<reference key="4">
    <citation type="journal article" date="2003" name="Science">
        <title>Empirical analysis of transcriptional activity in the Arabidopsis genome.</title>
        <authorList>
            <person name="Yamada K."/>
            <person name="Lim J."/>
            <person name="Dale J.M."/>
            <person name="Chen H."/>
            <person name="Shinn P."/>
            <person name="Palm C.J."/>
            <person name="Southwick A.M."/>
            <person name="Wu H.C."/>
            <person name="Kim C.J."/>
            <person name="Nguyen M."/>
            <person name="Pham P.K."/>
            <person name="Cheuk R.F."/>
            <person name="Karlin-Newmann G."/>
            <person name="Liu S.X."/>
            <person name="Lam B."/>
            <person name="Sakano H."/>
            <person name="Wu T."/>
            <person name="Yu G."/>
            <person name="Miranda M."/>
            <person name="Quach H.L."/>
            <person name="Tripp M."/>
            <person name="Chang C.H."/>
            <person name="Lee J.M."/>
            <person name="Toriumi M.J."/>
            <person name="Chan M.M."/>
            <person name="Tang C.C."/>
            <person name="Onodera C.S."/>
            <person name="Deng J.M."/>
            <person name="Akiyama K."/>
            <person name="Ansari Y."/>
            <person name="Arakawa T."/>
            <person name="Banh J."/>
            <person name="Banno F."/>
            <person name="Bowser L."/>
            <person name="Brooks S.Y."/>
            <person name="Carninci P."/>
            <person name="Chao Q."/>
            <person name="Choy N."/>
            <person name="Enju A."/>
            <person name="Goldsmith A.D."/>
            <person name="Gurjal M."/>
            <person name="Hansen N.F."/>
            <person name="Hayashizaki Y."/>
            <person name="Johnson-Hopson C."/>
            <person name="Hsuan V.W."/>
            <person name="Iida K."/>
            <person name="Karnes M."/>
            <person name="Khan S."/>
            <person name="Koesema E."/>
            <person name="Ishida J."/>
            <person name="Jiang P.X."/>
            <person name="Jones T."/>
            <person name="Kawai J."/>
            <person name="Kamiya A."/>
            <person name="Meyers C."/>
            <person name="Nakajima M."/>
            <person name="Narusaka M."/>
            <person name="Seki M."/>
            <person name="Sakurai T."/>
            <person name="Satou M."/>
            <person name="Tamse R."/>
            <person name="Vaysberg M."/>
            <person name="Wallender E.K."/>
            <person name="Wong C."/>
            <person name="Yamamura Y."/>
            <person name="Yuan S."/>
            <person name="Shinozaki K."/>
            <person name="Davis R.W."/>
            <person name="Theologis A."/>
            <person name="Ecker J.R."/>
        </authorList>
    </citation>
    <scope>NUCLEOTIDE SEQUENCE [LARGE SCALE MRNA]</scope>
    <source>
        <strain>cv. Columbia</strain>
    </source>
</reference>
<reference key="5">
    <citation type="journal article" date="1994" name="FEBS Lett.">
        <title>In vitro mutation analysis of Arabidopsis thaliana small GTP-binding proteins and detection of GAP-like activities in plant cells.</title>
        <authorList>
            <person name="Anai T."/>
            <person name="Matsui M."/>
            <person name="Nomura N."/>
            <person name="Ishizaki R."/>
            <person name="Uchimiya H."/>
        </authorList>
    </citation>
    <scope>FUNCTION</scope>
    <scope>MUTAGENESIS OF GLN-72 AND ASN-126</scope>
</reference>
<reference key="6">
    <citation type="journal article" date="2003" name="Plant Physiol.">
        <title>Analysis of the small GTPase gene superfamily of Arabidopsis.</title>
        <authorList>
            <person name="Vernoud V."/>
            <person name="Horton A.C."/>
            <person name="Yang Z."/>
            <person name="Nielsen E."/>
        </authorList>
    </citation>
    <scope>GENE FAMILY</scope>
    <scope>NOMENCLATURE</scope>
</reference>
<reference key="7">
    <citation type="journal article" date="2009" name="Plant Mol. Biol.">
        <title>Altered ARA2 (RABA1a) expression in Arabidopsis reveals the involvement of a Rab/YPT family member in auxin-mediated responses.</title>
        <authorList>
            <person name="Koh E.J."/>
            <person name="Kwon Y.R."/>
            <person name="Kim K.I."/>
            <person name="Hong S.W."/>
            <person name="Lee H."/>
        </authorList>
    </citation>
    <scope>FUNCTION</scope>
    <scope>SUBCELLULAR LOCATION</scope>
    <scope>INDUCTION BY AUXIN</scope>
    <scope>DISRUPTION PHENOTYPE</scope>
</reference>